<protein>
    <recommendedName>
        <fullName>Pre-mRNA-splicing ATP-dependent RNA helicase PRP28</fullName>
        <ecNumber>3.6.4.13</ecNumber>
    </recommendedName>
</protein>
<accession>P0CQ89</accession>
<accession>Q55Z43</accession>
<accession>Q5KNF8</accession>
<proteinExistence type="inferred from homology"/>
<name>PRP28_CRYNB</name>
<gene>
    <name type="primary">PRP28</name>
    <name type="ordered locus">CNBA6450</name>
</gene>
<sequence>MAGPLSVEDMLAKQKAEKEAAAKPKFLSKAERQKIALEKRQSEVREQQEREDAERRQREEFDRAAEEERRRHEQERYGYNAGPSGRNDRDGYGRDGYGRDNRRGFGDRRDGSGPAIPSGPRGAALPVGPRSMQSRNGGGLPYDGFAQGSPSQLSSTPVAGSASPGPASTTASGDAVPPSQAELEALRARYLGKRTDGKKPRLRKAQDKKIIFDWNEQDDTSAADQSSWTREVRELVPGGTMFGGRLAGMDGAKKNETRSDNHADPLERRRAVKGKDDDRHWSDKPLDEMKERDWRIFREDFSIAARGGGIPHPLRNWRESAIPSQILDIIEEIGYKEPSPIQRQAIPIGMQNRDLIGVAKTGSGKTAAFVIPMLDYIGHLPPLNDDNRHLGPYALIMAPTRELAQQIETETRRFALPLGYKCVSIVGGRSVEEQQFALRDGAEIIIATPGRLKDMVDKSILVMSQCRYVVMDEADRMVDLGFEVDLNFILDSMPATFVKPDDSVALQPTKEGEWQGWRVTTLFSATMPPAVERLARKYLIKPATVVIGNAGEAVDTVEQRVEFVHGDEKKKARLIEILRTIGLPPPIIVFVNQKKTADMVVKYVQQAGMSGVTLHSGKSQEQREAALQALRDGEISVLVATDLAGRGIDVPDVSLVINWQMSDTIEKYVHRIGRTGRAGKTGVAITFLTNDDDEVMYDLRIEVEKSKMSKMNPELARHEAARTRVTREMKRKRGDEEE</sequence>
<reference key="1">
    <citation type="journal article" date="2005" name="Science">
        <title>The genome of the basidiomycetous yeast and human pathogen Cryptococcus neoformans.</title>
        <authorList>
            <person name="Loftus B.J."/>
            <person name="Fung E."/>
            <person name="Roncaglia P."/>
            <person name="Rowley D."/>
            <person name="Amedeo P."/>
            <person name="Bruno D."/>
            <person name="Vamathevan J."/>
            <person name="Miranda M."/>
            <person name="Anderson I.J."/>
            <person name="Fraser J.A."/>
            <person name="Allen J.E."/>
            <person name="Bosdet I.E."/>
            <person name="Brent M.R."/>
            <person name="Chiu R."/>
            <person name="Doering T.L."/>
            <person name="Donlin M.J."/>
            <person name="D'Souza C.A."/>
            <person name="Fox D.S."/>
            <person name="Grinberg V."/>
            <person name="Fu J."/>
            <person name="Fukushima M."/>
            <person name="Haas B.J."/>
            <person name="Huang J.C."/>
            <person name="Janbon G."/>
            <person name="Jones S.J.M."/>
            <person name="Koo H.L."/>
            <person name="Krzywinski M.I."/>
            <person name="Kwon-Chung K.J."/>
            <person name="Lengeler K.B."/>
            <person name="Maiti R."/>
            <person name="Marra M.A."/>
            <person name="Marra R.E."/>
            <person name="Mathewson C.A."/>
            <person name="Mitchell T.G."/>
            <person name="Pertea M."/>
            <person name="Riggs F.R."/>
            <person name="Salzberg S.L."/>
            <person name="Schein J.E."/>
            <person name="Shvartsbeyn A."/>
            <person name="Shin H."/>
            <person name="Shumway M."/>
            <person name="Specht C.A."/>
            <person name="Suh B.B."/>
            <person name="Tenney A."/>
            <person name="Utterback T.R."/>
            <person name="Wickes B.L."/>
            <person name="Wortman J.R."/>
            <person name="Wye N.H."/>
            <person name="Kronstad J.W."/>
            <person name="Lodge J.K."/>
            <person name="Heitman J."/>
            <person name="Davis R.W."/>
            <person name="Fraser C.M."/>
            <person name="Hyman R.W."/>
        </authorList>
    </citation>
    <scope>NUCLEOTIDE SEQUENCE [LARGE SCALE GENOMIC DNA]</scope>
    <source>
        <strain>B-3501A</strain>
    </source>
</reference>
<keyword id="KW-0067">ATP-binding</keyword>
<keyword id="KW-0963">Cytoplasm</keyword>
<keyword id="KW-0347">Helicase</keyword>
<keyword id="KW-0378">Hydrolase</keyword>
<keyword id="KW-0507">mRNA processing</keyword>
<keyword id="KW-0508">mRNA splicing</keyword>
<keyword id="KW-0547">Nucleotide-binding</keyword>
<keyword id="KW-0539">Nucleus</keyword>
<organism>
    <name type="scientific">Cryptococcus neoformans var. neoformans serotype D (strain B-3501A)</name>
    <name type="common">Filobasidiella neoformans</name>
    <dbReference type="NCBI Taxonomy" id="283643"/>
    <lineage>
        <taxon>Eukaryota</taxon>
        <taxon>Fungi</taxon>
        <taxon>Dikarya</taxon>
        <taxon>Basidiomycota</taxon>
        <taxon>Agaricomycotina</taxon>
        <taxon>Tremellomycetes</taxon>
        <taxon>Tremellales</taxon>
        <taxon>Cryptococcaceae</taxon>
        <taxon>Cryptococcus</taxon>
        <taxon>Cryptococcus neoformans species complex</taxon>
    </lineage>
</organism>
<comment type="function">
    <text evidence="1">ATP-dependent RNA helicase involved in mRNA splicing. May destabilize the U1/5'-splice site duplex to permit an effective competition for the 5'-splice site by the U6 snRNA, resulting in the switch between U1 and U6 at the 5'-splice site. May also act to unwind the U4/U6 base-pairing interaction in the U4/U6/U5 snRNP, facilitating the first covalent step of splicing (By similarity).</text>
</comment>
<comment type="catalytic activity">
    <reaction>
        <text>ATP + H2O = ADP + phosphate + H(+)</text>
        <dbReference type="Rhea" id="RHEA:13065"/>
        <dbReference type="ChEBI" id="CHEBI:15377"/>
        <dbReference type="ChEBI" id="CHEBI:15378"/>
        <dbReference type="ChEBI" id="CHEBI:30616"/>
        <dbReference type="ChEBI" id="CHEBI:43474"/>
        <dbReference type="ChEBI" id="CHEBI:456216"/>
        <dbReference type="EC" id="3.6.4.13"/>
    </reaction>
</comment>
<comment type="subunit">
    <text evidence="1">Component of the U5 snRNP complex.</text>
</comment>
<comment type="subcellular location">
    <subcellularLocation>
        <location evidence="1">Cytoplasm</location>
    </subcellularLocation>
    <subcellularLocation>
        <location evidence="1">Nucleus</location>
    </subcellularLocation>
</comment>
<comment type="domain">
    <text>The Q motif is unique to and characteristic of the DEAD box family of RNA helicases and controls ATP binding and hydrolysis.</text>
</comment>
<comment type="similarity">
    <text evidence="5">Belongs to the DEAD box helicase family. DDX23/PRP28 subfamily.</text>
</comment>
<dbReference type="EC" id="3.6.4.13"/>
<dbReference type="EMBL" id="AAEY01000005">
    <property type="protein sequence ID" value="EAL22875.1"/>
    <property type="molecule type" value="Genomic_DNA"/>
</dbReference>
<dbReference type="RefSeq" id="XP_777522.1">
    <property type="nucleotide sequence ID" value="XM_772429.1"/>
</dbReference>
<dbReference type="SMR" id="P0CQ89"/>
<dbReference type="EnsemblFungi" id="AAW41184">
    <property type="protein sequence ID" value="AAW41184"/>
    <property type="gene ID" value="CNA06640"/>
</dbReference>
<dbReference type="GeneID" id="4933909"/>
<dbReference type="KEGG" id="cnb:CNBA6450"/>
<dbReference type="VEuPathDB" id="FungiDB:CNBA6450"/>
<dbReference type="HOGENOM" id="CLU_003041_11_3_1"/>
<dbReference type="OrthoDB" id="7130at5206"/>
<dbReference type="GO" id="GO:0005737">
    <property type="term" value="C:cytoplasm"/>
    <property type="evidence" value="ECO:0007669"/>
    <property type="project" value="UniProtKB-SubCell"/>
</dbReference>
<dbReference type="GO" id="GO:0005634">
    <property type="term" value="C:nucleus"/>
    <property type="evidence" value="ECO:0007669"/>
    <property type="project" value="UniProtKB-SubCell"/>
</dbReference>
<dbReference type="GO" id="GO:0005524">
    <property type="term" value="F:ATP binding"/>
    <property type="evidence" value="ECO:0007669"/>
    <property type="project" value="UniProtKB-KW"/>
</dbReference>
<dbReference type="GO" id="GO:0016887">
    <property type="term" value="F:ATP hydrolysis activity"/>
    <property type="evidence" value="ECO:0007669"/>
    <property type="project" value="RHEA"/>
</dbReference>
<dbReference type="GO" id="GO:0003676">
    <property type="term" value="F:nucleic acid binding"/>
    <property type="evidence" value="ECO:0007669"/>
    <property type="project" value="InterPro"/>
</dbReference>
<dbReference type="GO" id="GO:0003724">
    <property type="term" value="F:RNA helicase activity"/>
    <property type="evidence" value="ECO:0007669"/>
    <property type="project" value="UniProtKB-EC"/>
</dbReference>
<dbReference type="GO" id="GO:0006397">
    <property type="term" value="P:mRNA processing"/>
    <property type="evidence" value="ECO:0007669"/>
    <property type="project" value="UniProtKB-KW"/>
</dbReference>
<dbReference type="GO" id="GO:0008380">
    <property type="term" value="P:RNA splicing"/>
    <property type="evidence" value="ECO:0007669"/>
    <property type="project" value="UniProtKB-KW"/>
</dbReference>
<dbReference type="CDD" id="cd17945">
    <property type="entry name" value="DEADc_DDX23"/>
    <property type="match status" value="1"/>
</dbReference>
<dbReference type="CDD" id="cd18787">
    <property type="entry name" value="SF2_C_DEAD"/>
    <property type="match status" value="1"/>
</dbReference>
<dbReference type="Gene3D" id="3.40.50.300">
    <property type="entry name" value="P-loop containing nucleotide triphosphate hydrolases"/>
    <property type="match status" value="2"/>
</dbReference>
<dbReference type="InterPro" id="IPR011545">
    <property type="entry name" value="DEAD/DEAH_box_helicase_dom"/>
</dbReference>
<dbReference type="InterPro" id="IPR014001">
    <property type="entry name" value="Helicase_ATP-bd"/>
</dbReference>
<dbReference type="InterPro" id="IPR001650">
    <property type="entry name" value="Helicase_C-like"/>
</dbReference>
<dbReference type="InterPro" id="IPR027417">
    <property type="entry name" value="P-loop_NTPase"/>
</dbReference>
<dbReference type="InterPro" id="IPR000629">
    <property type="entry name" value="RNA-helicase_DEAD-box_CS"/>
</dbReference>
<dbReference type="InterPro" id="IPR014014">
    <property type="entry name" value="RNA_helicase_DEAD_Q_motif"/>
</dbReference>
<dbReference type="PANTHER" id="PTHR47958">
    <property type="entry name" value="ATP-DEPENDENT RNA HELICASE DBP3"/>
    <property type="match status" value="1"/>
</dbReference>
<dbReference type="Pfam" id="PF25430">
    <property type="entry name" value="DDX23"/>
    <property type="match status" value="1"/>
</dbReference>
<dbReference type="Pfam" id="PF00270">
    <property type="entry name" value="DEAD"/>
    <property type="match status" value="1"/>
</dbReference>
<dbReference type="Pfam" id="PF00271">
    <property type="entry name" value="Helicase_C"/>
    <property type="match status" value="1"/>
</dbReference>
<dbReference type="SMART" id="SM00487">
    <property type="entry name" value="DEXDc"/>
    <property type="match status" value="1"/>
</dbReference>
<dbReference type="SMART" id="SM00490">
    <property type="entry name" value="HELICc"/>
    <property type="match status" value="1"/>
</dbReference>
<dbReference type="SUPFAM" id="SSF52540">
    <property type="entry name" value="P-loop containing nucleoside triphosphate hydrolases"/>
    <property type="match status" value="1"/>
</dbReference>
<dbReference type="PROSITE" id="PS00039">
    <property type="entry name" value="DEAD_ATP_HELICASE"/>
    <property type="match status" value="1"/>
</dbReference>
<dbReference type="PROSITE" id="PS51192">
    <property type="entry name" value="HELICASE_ATP_BIND_1"/>
    <property type="match status" value="1"/>
</dbReference>
<dbReference type="PROSITE" id="PS51194">
    <property type="entry name" value="HELICASE_CTER"/>
    <property type="match status" value="1"/>
</dbReference>
<dbReference type="PROSITE" id="PS51195">
    <property type="entry name" value="Q_MOTIF"/>
    <property type="match status" value="1"/>
</dbReference>
<feature type="chain" id="PRO_0000410255" description="Pre-mRNA-splicing ATP-dependent RNA helicase PRP28">
    <location>
        <begin position="1"/>
        <end position="738"/>
    </location>
</feature>
<feature type="domain" description="Helicase ATP-binding" evidence="2">
    <location>
        <begin position="346"/>
        <end position="545"/>
    </location>
</feature>
<feature type="domain" description="Helicase C-terminal" evidence="3">
    <location>
        <begin position="556"/>
        <end position="719"/>
    </location>
</feature>
<feature type="region of interest" description="Disordered" evidence="4">
    <location>
        <begin position="1"/>
        <end position="184"/>
    </location>
</feature>
<feature type="region of interest" description="Disordered" evidence="4">
    <location>
        <begin position="239"/>
        <end position="284"/>
    </location>
</feature>
<feature type="region of interest" description="Disordered" evidence="4">
    <location>
        <begin position="709"/>
        <end position="738"/>
    </location>
</feature>
<feature type="short sequence motif" description="Q motif">
    <location>
        <begin position="315"/>
        <end position="343"/>
    </location>
</feature>
<feature type="short sequence motif" description="DEAD box">
    <location>
        <begin position="472"/>
        <end position="475"/>
    </location>
</feature>
<feature type="compositionally biased region" description="Basic and acidic residues" evidence="4">
    <location>
        <begin position="10"/>
        <end position="76"/>
    </location>
</feature>
<feature type="compositionally biased region" description="Basic and acidic residues" evidence="4">
    <location>
        <begin position="86"/>
        <end position="111"/>
    </location>
</feature>
<feature type="compositionally biased region" description="Low complexity" evidence="4">
    <location>
        <begin position="154"/>
        <end position="173"/>
    </location>
</feature>
<feature type="compositionally biased region" description="Basic and acidic residues" evidence="4">
    <location>
        <begin position="251"/>
        <end position="284"/>
    </location>
</feature>
<feature type="compositionally biased region" description="Basic and acidic residues" evidence="4">
    <location>
        <begin position="715"/>
        <end position="738"/>
    </location>
</feature>
<feature type="binding site" evidence="2">
    <location>
        <begin position="359"/>
        <end position="366"/>
    </location>
    <ligand>
        <name>ATP</name>
        <dbReference type="ChEBI" id="CHEBI:30616"/>
    </ligand>
</feature>
<evidence type="ECO:0000250" key="1"/>
<evidence type="ECO:0000255" key="2">
    <source>
        <dbReference type="PROSITE-ProRule" id="PRU00541"/>
    </source>
</evidence>
<evidence type="ECO:0000255" key="3">
    <source>
        <dbReference type="PROSITE-ProRule" id="PRU00542"/>
    </source>
</evidence>
<evidence type="ECO:0000256" key="4">
    <source>
        <dbReference type="SAM" id="MobiDB-lite"/>
    </source>
</evidence>
<evidence type="ECO:0000305" key="5"/>